<proteinExistence type="evidence at transcript level"/>
<keyword id="KW-0325">Glycoprotein</keyword>
<keyword id="KW-1185">Reference proteome</keyword>
<keyword id="KW-0964">Secreted</keyword>
<protein>
    <recommendedName>
        <fullName>Serpin B5</fullName>
    </recommendedName>
</protein>
<reference key="1">
    <citation type="submission" date="2004-06" db="EMBL/GenBank/DDBJ databases">
        <authorList>
            <consortium name="NIH - Xenopus Gene Collection (XGC) project"/>
        </authorList>
    </citation>
    <scope>NUCLEOTIDE SEQUENCE [LARGE SCALE MRNA]</scope>
    <source>
        <tissue>Brain</tissue>
    </source>
</reference>
<name>SPB5_XENLA</name>
<feature type="chain" id="PRO_0000372429" description="Serpin B5">
    <location>
        <begin position="1"/>
        <end position="383"/>
    </location>
</feature>
<feature type="glycosylation site" description="N-linked (GlcNAc...) asparagine" evidence="2">
    <location>
        <position position="106"/>
    </location>
</feature>
<feature type="glycosylation site" description="N-linked (GlcNAc...) asparagine" evidence="2">
    <location>
        <position position="133"/>
    </location>
</feature>
<feature type="glycosylation site" description="N-linked (GlcNAc...) asparagine" evidence="2">
    <location>
        <position position="176"/>
    </location>
</feature>
<feature type="glycosylation site" description="N-linked (GlcNAc...) asparagine" evidence="2">
    <location>
        <position position="361"/>
    </location>
</feature>
<sequence length="383" mass="43417">MDALRLANTGLAVDIFKKLCEKSATDNFVFSPICISTSLALLHRGSQGNTASELQKVLHFEKVKDSDFGFQLLSSDISKVISIYSLKLLKRVYVDNSIECKKDFINSTKKPYPLELETIDIKSRPEEARCQINSSVKELTDGNFEAVLNEGSCDEKTKIIMLGAASFKGNWVYKFNESETKEMDFHINKKETKPVQMMHLEARLSIGYINELKTMVLELPFTSKHLSILILLPKDIEDDSTGLKKLEQDMTFEKYAQWTNPSMMANSKVKVYLPKFKLESSFDLKDMLKSLGINDAFNEEASDFSGMTESKDTSISQAIHKACIEVNEDGTEAPDVTMERRLMNKEEFCADRPFIFILRHNKTRTIIMFGRYCGPCEASSTAD</sequence>
<dbReference type="EMBL" id="BC074408">
    <property type="protein sequence ID" value="AAH74408.1"/>
    <property type="molecule type" value="mRNA"/>
</dbReference>
<dbReference type="RefSeq" id="NP_001086270.1">
    <property type="nucleotide sequence ID" value="NM_001092801.1"/>
</dbReference>
<dbReference type="RefSeq" id="XP_018124197.1">
    <property type="nucleotide sequence ID" value="XM_018268708.1"/>
</dbReference>
<dbReference type="RefSeq" id="XP_018124198.1">
    <property type="nucleotide sequence ID" value="XM_018268709.1"/>
</dbReference>
<dbReference type="SMR" id="Q6GLQ1"/>
<dbReference type="MEROPS" id="I04.980"/>
<dbReference type="GlyCosmos" id="Q6GLQ1">
    <property type="glycosylation" value="4 sites, No reported glycans"/>
</dbReference>
<dbReference type="DNASU" id="444699"/>
<dbReference type="GeneID" id="444699"/>
<dbReference type="KEGG" id="xla:444699"/>
<dbReference type="AGR" id="Xenbase:XB-GENE-5803019"/>
<dbReference type="CTD" id="444699"/>
<dbReference type="Xenbase" id="XB-GENE-5803019">
    <property type="gene designation" value="serpinb5.S"/>
</dbReference>
<dbReference type="OMA" id="FITNWMK"/>
<dbReference type="OrthoDB" id="671595at2759"/>
<dbReference type="Proteomes" id="UP000186698">
    <property type="component" value="Chromosome 6S"/>
</dbReference>
<dbReference type="Bgee" id="444699">
    <property type="expression patterns" value="Expressed in zone of skin and 9 other cell types or tissues"/>
</dbReference>
<dbReference type="GO" id="GO:0005615">
    <property type="term" value="C:extracellular space"/>
    <property type="evidence" value="ECO:0000318"/>
    <property type="project" value="GO_Central"/>
</dbReference>
<dbReference type="GO" id="GO:0004867">
    <property type="term" value="F:serine-type endopeptidase inhibitor activity"/>
    <property type="evidence" value="ECO:0000318"/>
    <property type="project" value="GO_Central"/>
</dbReference>
<dbReference type="CDD" id="cd02057">
    <property type="entry name" value="serpinB5_maspin"/>
    <property type="match status" value="1"/>
</dbReference>
<dbReference type="FunFam" id="2.30.39.10:FF:000014">
    <property type="entry name" value="Serpin family B member 9"/>
    <property type="match status" value="1"/>
</dbReference>
<dbReference type="Gene3D" id="2.30.39.10">
    <property type="entry name" value="Alpha-1-antitrypsin, domain 1"/>
    <property type="match status" value="1"/>
</dbReference>
<dbReference type="Gene3D" id="3.30.497.10">
    <property type="entry name" value="Antithrombin, subunit I, domain 2"/>
    <property type="match status" value="1"/>
</dbReference>
<dbReference type="InterPro" id="IPR000240">
    <property type="entry name" value="Serpin_B9/Maspin"/>
</dbReference>
<dbReference type="InterPro" id="IPR023795">
    <property type="entry name" value="Serpin_CS"/>
</dbReference>
<dbReference type="InterPro" id="IPR023796">
    <property type="entry name" value="Serpin_dom"/>
</dbReference>
<dbReference type="InterPro" id="IPR000215">
    <property type="entry name" value="Serpin_fam"/>
</dbReference>
<dbReference type="InterPro" id="IPR036186">
    <property type="entry name" value="Serpin_sf"/>
</dbReference>
<dbReference type="InterPro" id="IPR042178">
    <property type="entry name" value="Serpin_sf_1"/>
</dbReference>
<dbReference type="InterPro" id="IPR042185">
    <property type="entry name" value="Serpin_sf_2"/>
</dbReference>
<dbReference type="InterPro" id="IPR033836">
    <property type="entry name" value="SERPINB5_serpin_dom"/>
</dbReference>
<dbReference type="PANTHER" id="PTHR11461">
    <property type="entry name" value="SERINE PROTEASE INHIBITOR, SERPIN"/>
    <property type="match status" value="1"/>
</dbReference>
<dbReference type="PANTHER" id="PTHR11461:SF55">
    <property type="entry name" value="SERPIN B5"/>
    <property type="match status" value="1"/>
</dbReference>
<dbReference type="Pfam" id="PF00079">
    <property type="entry name" value="Serpin"/>
    <property type="match status" value="1"/>
</dbReference>
<dbReference type="PRINTS" id="PR00676">
    <property type="entry name" value="MASPIN"/>
</dbReference>
<dbReference type="SMART" id="SM00093">
    <property type="entry name" value="SERPIN"/>
    <property type="match status" value="1"/>
</dbReference>
<dbReference type="SUPFAM" id="SSF56574">
    <property type="entry name" value="Serpins"/>
    <property type="match status" value="1"/>
</dbReference>
<dbReference type="PROSITE" id="PS00284">
    <property type="entry name" value="SERPIN"/>
    <property type="match status" value="1"/>
</dbReference>
<evidence type="ECO:0000250" key="1"/>
<evidence type="ECO:0000255" key="2"/>
<evidence type="ECO:0000305" key="3"/>
<organism>
    <name type="scientific">Xenopus laevis</name>
    <name type="common">African clawed frog</name>
    <dbReference type="NCBI Taxonomy" id="8355"/>
    <lineage>
        <taxon>Eukaryota</taxon>
        <taxon>Metazoa</taxon>
        <taxon>Chordata</taxon>
        <taxon>Craniata</taxon>
        <taxon>Vertebrata</taxon>
        <taxon>Euteleostomi</taxon>
        <taxon>Amphibia</taxon>
        <taxon>Batrachia</taxon>
        <taxon>Anura</taxon>
        <taxon>Pipoidea</taxon>
        <taxon>Pipidae</taxon>
        <taxon>Xenopodinae</taxon>
        <taxon>Xenopus</taxon>
        <taxon>Xenopus</taxon>
    </lineage>
</organism>
<comment type="function">
    <text evidence="1">May not exhibit serine protease inhibitory activity.</text>
</comment>
<comment type="subcellular location">
    <subcellularLocation>
        <location>Secreted</location>
        <location>Extracellular space</location>
    </subcellularLocation>
</comment>
<comment type="similarity">
    <text evidence="3">Belongs to the serpin family. Ov-serpin subfamily.</text>
</comment>
<gene>
    <name type="primary">serpinb5</name>
</gene>
<accession>Q6GLQ1</accession>